<dbReference type="EC" id="1.7.99.1" evidence="1"/>
<dbReference type="EMBL" id="CP001600">
    <property type="protein sequence ID" value="ACR69670.1"/>
    <property type="molecule type" value="Genomic_DNA"/>
</dbReference>
<dbReference type="RefSeq" id="WP_015871782.1">
    <property type="nucleotide sequence ID" value="NZ_CP169062.1"/>
</dbReference>
<dbReference type="SMR" id="C5BEA9"/>
<dbReference type="STRING" id="67780.B6E78_04615"/>
<dbReference type="GeneID" id="69539413"/>
<dbReference type="KEGG" id="eic:NT01EI_2500"/>
<dbReference type="PATRIC" id="fig|634503.3.peg.2222"/>
<dbReference type="HOGENOM" id="CLU_038344_2_0_6"/>
<dbReference type="OrthoDB" id="9761526at2"/>
<dbReference type="Proteomes" id="UP000001485">
    <property type="component" value="Chromosome"/>
</dbReference>
<dbReference type="GO" id="GO:0005737">
    <property type="term" value="C:cytoplasm"/>
    <property type="evidence" value="ECO:0007669"/>
    <property type="project" value="UniProtKB-SubCell"/>
</dbReference>
<dbReference type="GO" id="GO:0051537">
    <property type="term" value="F:2 iron, 2 sulfur cluster binding"/>
    <property type="evidence" value="ECO:0007669"/>
    <property type="project" value="UniProtKB-KW"/>
</dbReference>
<dbReference type="GO" id="GO:0050418">
    <property type="term" value="F:hydroxylamine reductase activity"/>
    <property type="evidence" value="ECO:0007669"/>
    <property type="project" value="UniProtKB-UniRule"/>
</dbReference>
<dbReference type="GO" id="GO:0046872">
    <property type="term" value="F:metal ion binding"/>
    <property type="evidence" value="ECO:0007669"/>
    <property type="project" value="UniProtKB-KW"/>
</dbReference>
<dbReference type="GO" id="GO:0004601">
    <property type="term" value="F:peroxidase activity"/>
    <property type="evidence" value="ECO:0007669"/>
    <property type="project" value="TreeGrafter"/>
</dbReference>
<dbReference type="GO" id="GO:0042542">
    <property type="term" value="P:response to hydrogen peroxide"/>
    <property type="evidence" value="ECO:0007669"/>
    <property type="project" value="TreeGrafter"/>
</dbReference>
<dbReference type="CDD" id="cd01914">
    <property type="entry name" value="HCP"/>
    <property type="match status" value="1"/>
</dbReference>
<dbReference type="FunFam" id="1.20.1270.20:FF:000001">
    <property type="entry name" value="Hydroxylamine reductase"/>
    <property type="match status" value="1"/>
</dbReference>
<dbReference type="FunFam" id="1.20.1270.20:FF:000002">
    <property type="entry name" value="Hydroxylamine reductase"/>
    <property type="match status" value="1"/>
</dbReference>
<dbReference type="FunFam" id="3.40.50.2030:FF:000001">
    <property type="entry name" value="Hydroxylamine reductase"/>
    <property type="match status" value="1"/>
</dbReference>
<dbReference type="FunFam" id="3.40.50.2030:FF:000002">
    <property type="entry name" value="Hydroxylamine reductase"/>
    <property type="match status" value="1"/>
</dbReference>
<dbReference type="Gene3D" id="1.20.1270.20">
    <property type="match status" value="2"/>
</dbReference>
<dbReference type="Gene3D" id="3.40.50.2030">
    <property type="match status" value="2"/>
</dbReference>
<dbReference type="HAMAP" id="MF_00069">
    <property type="entry name" value="Hydroxylam_reduct"/>
    <property type="match status" value="1"/>
</dbReference>
<dbReference type="InterPro" id="IPR004137">
    <property type="entry name" value="HCP/CODH"/>
</dbReference>
<dbReference type="InterPro" id="IPR010048">
    <property type="entry name" value="Hydroxylam_reduct"/>
</dbReference>
<dbReference type="InterPro" id="IPR016099">
    <property type="entry name" value="Prismane-like_a/b-sand"/>
</dbReference>
<dbReference type="InterPro" id="IPR011254">
    <property type="entry name" value="Prismane-like_sf"/>
</dbReference>
<dbReference type="InterPro" id="IPR016100">
    <property type="entry name" value="Prismane_a-bundle"/>
</dbReference>
<dbReference type="NCBIfam" id="TIGR01703">
    <property type="entry name" value="hybrid_clust"/>
    <property type="match status" value="1"/>
</dbReference>
<dbReference type="NCBIfam" id="NF003658">
    <property type="entry name" value="PRK05290.1"/>
    <property type="match status" value="1"/>
</dbReference>
<dbReference type="PANTHER" id="PTHR30109">
    <property type="entry name" value="HYDROXYLAMINE REDUCTASE"/>
    <property type="match status" value="1"/>
</dbReference>
<dbReference type="PANTHER" id="PTHR30109:SF0">
    <property type="entry name" value="HYDROXYLAMINE REDUCTASE"/>
    <property type="match status" value="1"/>
</dbReference>
<dbReference type="Pfam" id="PF03063">
    <property type="entry name" value="Prismane"/>
    <property type="match status" value="1"/>
</dbReference>
<dbReference type="PIRSF" id="PIRSF000076">
    <property type="entry name" value="HCP"/>
    <property type="match status" value="1"/>
</dbReference>
<dbReference type="SUPFAM" id="SSF56821">
    <property type="entry name" value="Prismane protein-like"/>
    <property type="match status" value="1"/>
</dbReference>
<name>HCP_EDWI9</name>
<organism>
    <name type="scientific">Edwardsiella ictaluri (strain 93-146)</name>
    <dbReference type="NCBI Taxonomy" id="634503"/>
    <lineage>
        <taxon>Bacteria</taxon>
        <taxon>Pseudomonadati</taxon>
        <taxon>Pseudomonadota</taxon>
        <taxon>Gammaproteobacteria</taxon>
        <taxon>Enterobacterales</taxon>
        <taxon>Hafniaceae</taxon>
        <taxon>Edwardsiella</taxon>
    </lineage>
</organism>
<proteinExistence type="inferred from homology"/>
<reference key="1">
    <citation type="submission" date="2009-03" db="EMBL/GenBank/DDBJ databases">
        <title>Complete genome sequence of Edwardsiella ictaluri 93-146.</title>
        <authorList>
            <person name="Williams M.L."/>
            <person name="Gillaspy A.F."/>
            <person name="Dyer D.W."/>
            <person name="Thune R.L."/>
            <person name="Waldbieser G.C."/>
            <person name="Schuster S.C."/>
            <person name="Gipson J."/>
            <person name="Zaitshik J."/>
            <person name="Landry C."/>
            <person name="Lawrence M.L."/>
        </authorList>
    </citation>
    <scope>NUCLEOTIDE SEQUENCE [LARGE SCALE GENOMIC DNA]</scope>
    <source>
        <strain>93-146</strain>
    </source>
</reference>
<feature type="chain" id="PRO_1000202437" description="Hydroxylamine reductase">
    <location>
        <begin position="1"/>
        <end position="551"/>
    </location>
</feature>
<feature type="binding site" evidence="1">
    <location>
        <position position="3"/>
    </location>
    <ligand>
        <name>[2Fe-2S] cluster</name>
        <dbReference type="ChEBI" id="CHEBI:190135"/>
    </ligand>
</feature>
<feature type="binding site" evidence="1">
    <location>
        <position position="6"/>
    </location>
    <ligand>
        <name>[2Fe-2S] cluster</name>
        <dbReference type="ChEBI" id="CHEBI:190135"/>
    </ligand>
</feature>
<feature type="binding site" evidence="1">
    <location>
        <position position="18"/>
    </location>
    <ligand>
        <name>[2Fe-2S] cluster</name>
        <dbReference type="ChEBI" id="CHEBI:190135"/>
    </ligand>
</feature>
<feature type="binding site" evidence="1">
    <location>
        <position position="25"/>
    </location>
    <ligand>
        <name>[2Fe-2S] cluster</name>
        <dbReference type="ChEBI" id="CHEBI:190135"/>
    </ligand>
</feature>
<feature type="binding site" evidence="1">
    <location>
        <position position="249"/>
    </location>
    <ligand>
        <name>hybrid [4Fe-2O-2S] cluster</name>
        <dbReference type="ChEBI" id="CHEBI:60519"/>
    </ligand>
</feature>
<feature type="binding site" evidence="1">
    <location>
        <position position="273"/>
    </location>
    <ligand>
        <name>hybrid [4Fe-2O-2S] cluster</name>
        <dbReference type="ChEBI" id="CHEBI:60519"/>
    </ligand>
</feature>
<feature type="binding site" evidence="1">
    <location>
        <position position="317"/>
    </location>
    <ligand>
        <name>hybrid [4Fe-2O-2S] cluster</name>
        <dbReference type="ChEBI" id="CHEBI:60519"/>
    </ligand>
</feature>
<feature type="binding site" description="via persulfide group" evidence="1">
    <location>
        <position position="405"/>
    </location>
    <ligand>
        <name>hybrid [4Fe-2O-2S] cluster</name>
        <dbReference type="ChEBI" id="CHEBI:60519"/>
    </ligand>
</feature>
<feature type="binding site" evidence="1">
    <location>
        <position position="433"/>
    </location>
    <ligand>
        <name>hybrid [4Fe-2O-2S] cluster</name>
        <dbReference type="ChEBI" id="CHEBI:60519"/>
    </ligand>
</feature>
<feature type="binding site" evidence="1">
    <location>
        <position position="458"/>
    </location>
    <ligand>
        <name>hybrid [4Fe-2O-2S] cluster</name>
        <dbReference type="ChEBI" id="CHEBI:60519"/>
    </ligand>
</feature>
<feature type="binding site" evidence="1">
    <location>
        <position position="492"/>
    </location>
    <ligand>
        <name>hybrid [4Fe-2O-2S] cluster</name>
        <dbReference type="ChEBI" id="CHEBI:60519"/>
    </ligand>
</feature>
<feature type="binding site" evidence="1">
    <location>
        <position position="494"/>
    </location>
    <ligand>
        <name>hybrid [4Fe-2O-2S] cluster</name>
        <dbReference type="ChEBI" id="CHEBI:60519"/>
    </ligand>
</feature>
<feature type="modified residue" description="Cysteine persulfide" evidence="1">
    <location>
        <position position="405"/>
    </location>
</feature>
<accession>C5BEA9</accession>
<protein>
    <recommendedName>
        <fullName evidence="1">Hydroxylamine reductase</fullName>
        <ecNumber evidence="1">1.7.99.1</ecNumber>
    </recommendedName>
    <alternativeName>
        <fullName evidence="1">Hybrid-cluster protein</fullName>
        <shortName evidence="1">HCP</shortName>
    </alternativeName>
    <alternativeName>
        <fullName evidence="1">Prismane protein</fullName>
    </alternativeName>
</protein>
<gene>
    <name evidence="1" type="primary">hcp</name>
    <name type="ordered locus">NT01EI_2500</name>
</gene>
<comment type="function">
    <text evidence="1">Catalyzes the reduction of hydroxylamine to form NH(3) and H(2)O.</text>
</comment>
<comment type="catalytic activity">
    <reaction evidence="1">
        <text>A + NH4(+) + H2O = hydroxylamine + AH2 + H(+)</text>
        <dbReference type="Rhea" id="RHEA:22052"/>
        <dbReference type="ChEBI" id="CHEBI:13193"/>
        <dbReference type="ChEBI" id="CHEBI:15377"/>
        <dbReference type="ChEBI" id="CHEBI:15378"/>
        <dbReference type="ChEBI" id="CHEBI:15429"/>
        <dbReference type="ChEBI" id="CHEBI:17499"/>
        <dbReference type="ChEBI" id="CHEBI:28938"/>
        <dbReference type="EC" id="1.7.99.1"/>
    </reaction>
</comment>
<comment type="cofactor">
    <cofactor evidence="1">
        <name>[2Fe-2S] cluster</name>
        <dbReference type="ChEBI" id="CHEBI:190135"/>
    </cofactor>
    <text evidence="1">Binds 1 [2Fe-2S] cluster.</text>
</comment>
<comment type="cofactor">
    <cofactor evidence="1">
        <name>hybrid [4Fe-2O-2S] cluster</name>
        <dbReference type="ChEBI" id="CHEBI:60519"/>
    </cofactor>
    <text evidence="1">Binds 1 hybrid [4Fe-2O-2S] cluster.</text>
</comment>
<comment type="subcellular location">
    <subcellularLocation>
        <location evidence="1">Cytoplasm</location>
    </subcellularLocation>
</comment>
<comment type="similarity">
    <text evidence="1">Belongs to the HCP family.</text>
</comment>
<sequence length="551" mass="60434">MYCVQCEQTIRTPAGNGCSYAQGMCGKSAETSDLQDLLVAALQSLSAWALLARELDIRDRTIDSFAPRAFFATLTNVNFDSARIIGYAREALAMRDSLRTACLAKAPGTQCDHPLADLRLQGEDVATLRRQAAEFALDSDRAEIGDDIHGLRMLSLYGLKGAAAYMEHAHVLGQHSEAIYAQYHHYMAWLGTRPCDMDTLLDNAMGIGKMNFAIMAQLDKGETEAYGDPTPTSVNVRPLAGKCILISGHDLKDLQMLLEQTDGLGINVYTHGEMLPAHGYPELRKYRHLVGNYGSGWQNQQQEFARFPGPILMTSNCIIDPNVGNYSDRIWTRSIVGWPGVRHLEGDDFSQVIAQAQVCDGFPYSEIEHLITVGFGRATLLNAADSVIDLVAQKKLRHVFLLGGCDGSRDERSYYTDFARAIPQDCLIMTLACGKYRFNKLEFGTLEGLPRLLDVGQCNDAYGAIMLAVNLAEKLGCGINDLPLSLILSWFEQKAIVILLTLLALGVKNIYTGPTAPGFLTDNLLAILNQRFGMRAISTVDADLNGILGHA</sequence>
<evidence type="ECO:0000255" key="1">
    <source>
        <dbReference type="HAMAP-Rule" id="MF_00069"/>
    </source>
</evidence>
<keyword id="KW-0001">2Fe-2S</keyword>
<keyword id="KW-0963">Cytoplasm</keyword>
<keyword id="KW-0408">Iron</keyword>
<keyword id="KW-0411">Iron-sulfur</keyword>
<keyword id="KW-0479">Metal-binding</keyword>
<keyword id="KW-0560">Oxidoreductase</keyword>